<accession>Q5RFJ3</accession>
<name>UD2A3_PONAB</name>
<evidence type="ECO:0000250" key="1"/>
<evidence type="ECO:0000255" key="2"/>
<evidence type="ECO:0000305" key="3"/>
<protein>
    <recommendedName>
        <fullName>UDP-glucuronosyltransferase 2A3</fullName>
        <shortName>UDPGT 2A3</shortName>
        <ecNumber>2.4.1.17</ecNumber>
    </recommendedName>
</protein>
<gene>
    <name type="primary">UGT2A3</name>
</gene>
<sequence length="527" mass="60200">MRSEKSALVFLLLQLFCVGCGFCGKVLVWPCDMSHWLNVKVILEELIVRGHEVTVLTHSKSLLIDYRKPSALKFEVVHMPQDKTEGNEVFVDLALNVLPGLPTWQSVIKLNDFFVEIRGTLKMMCESFIYNQTLMKKLQETNYDVMLIDPVIPCGDLMAELLAVPFVLTLRISLGGNMERSCGKLPAPLSYVPVPMTGLTDRMTFLERVKNSMLSVFFHFWIQDYDYHFWEEFYSKALGRPTTLCETVGKAEIWLIRTYWDFEFPQPYQPNFEFVGGLHCKPAKALPKEMENFVQSSGEDGIVVFSLGSLFQNVTEEKANIIASALAQIPQKVLWRYKGKKPSTLGTNTRLYDWIPQNDLLGHPKTKAFITHGGMNGIYEAIYHGVPMVGVPIFGDQLDNIAHMKAKGAAVEINFKTMTSEDLLRALRTVTTNSSYKENAMRLSRIHHDQPVKPLDRAVFWIEFVMRHKGAKHLRSAAHNLTWFQHYSIDVIGFLLACVATAIFLFTKCCLFSCQKFNKTRKIEKRE</sequence>
<dbReference type="EC" id="2.4.1.17"/>
<dbReference type="EMBL" id="CR857163">
    <property type="protein sequence ID" value="CAH89464.1"/>
    <property type="molecule type" value="mRNA"/>
</dbReference>
<dbReference type="RefSeq" id="NP_001127151.1">
    <property type="nucleotide sequence ID" value="NM_001133679.2"/>
</dbReference>
<dbReference type="SMR" id="Q5RFJ3"/>
<dbReference type="FunCoup" id="Q5RFJ3">
    <property type="interactions" value="306"/>
</dbReference>
<dbReference type="STRING" id="9601.ENSPPYP00000016512"/>
<dbReference type="CAZy" id="GT1">
    <property type="family name" value="Glycosyltransferase Family 1"/>
</dbReference>
<dbReference type="GlyCosmos" id="Q5RFJ3">
    <property type="glycosylation" value="1 site, No reported glycans"/>
</dbReference>
<dbReference type="GeneID" id="100174202"/>
<dbReference type="KEGG" id="pon:100174202"/>
<dbReference type="CTD" id="79799"/>
<dbReference type="eggNOG" id="KOG1192">
    <property type="taxonomic scope" value="Eukaryota"/>
</dbReference>
<dbReference type="InParanoid" id="Q5RFJ3"/>
<dbReference type="OrthoDB" id="5835829at2759"/>
<dbReference type="Proteomes" id="UP000001595">
    <property type="component" value="Unplaced"/>
</dbReference>
<dbReference type="GO" id="GO:0016020">
    <property type="term" value="C:membrane"/>
    <property type="evidence" value="ECO:0007669"/>
    <property type="project" value="UniProtKB-SubCell"/>
</dbReference>
<dbReference type="GO" id="GO:0015020">
    <property type="term" value="F:glucuronosyltransferase activity"/>
    <property type="evidence" value="ECO:0007669"/>
    <property type="project" value="UniProtKB-EC"/>
</dbReference>
<dbReference type="CDD" id="cd03784">
    <property type="entry name" value="GT1_Gtf-like"/>
    <property type="match status" value="1"/>
</dbReference>
<dbReference type="FunFam" id="3.40.50.2000:FF:000001">
    <property type="entry name" value="UDP-glucuronosyltransferase"/>
    <property type="match status" value="1"/>
</dbReference>
<dbReference type="FunFam" id="3.40.50.2000:FF:000081">
    <property type="entry name" value="UDP-glucuronosyltransferase 2A2"/>
    <property type="match status" value="1"/>
</dbReference>
<dbReference type="Gene3D" id="3.40.50.2000">
    <property type="entry name" value="Glycogen Phosphorylase B"/>
    <property type="match status" value="2"/>
</dbReference>
<dbReference type="InterPro" id="IPR050271">
    <property type="entry name" value="UDP-glycosyltransferase"/>
</dbReference>
<dbReference type="InterPro" id="IPR002213">
    <property type="entry name" value="UDP_glucos_trans"/>
</dbReference>
<dbReference type="InterPro" id="IPR035595">
    <property type="entry name" value="UDP_glycos_trans_CS"/>
</dbReference>
<dbReference type="PANTHER" id="PTHR48043">
    <property type="entry name" value="EG:EG0003.4 PROTEIN-RELATED"/>
    <property type="match status" value="1"/>
</dbReference>
<dbReference type="PANTHER" id="PTHR48043:SF137">
    <property type="entry name" value="UDP-GLUCURONOSYLTRANSFERASE 2A3"/>
    <property type="match status" value="1"/>
</dbReference>
<dbReference type="Pfam" id="PF00201">
    <property type="entry name" value="UDPGT"/>
    <property type="match status" value="1"/>
</dbReference>
<dbReference type="SUPFAM" id="SSF53756">
    <property type="entry name" value="UDP-Glycosyltransferase/glycogen phosphorylase"/>
    <property type="match status" value="1"/>
</dbReference>
<dbReference type="PROSITE" id="PS00375">
    <property type="entry name" value="UDPGT"/>
    <property type="match status" value="1"/>
</dbReference>
<proteinExistence type="evidence at transcript level"/>
<reference key="1">
    <citation type="submission" date="2004-11" db="EMBL/GenBank/DDBJ databases">
        <authorList>
            <consortium name="The German cDNA consortium"/>
        </authorList>
    </citation>
    <scope>NUCLEOTIDE SEQUENCE [LARGE SCALE MRNA]</scope>
    <source>
        <tissue>Kidney</tissue>
    </source>
</reference>
<organism>
    <name type="scientific">Pongo abelii</name>
    <name type="common">Sumatran orangutan</name>
    <name type="synonym">Pongo pygmaeus abelii</name>
    <dbReference type="NCBI Taxonomy" id="9601"/>
    <lineage>
        <taxon>Eukaryota</taxon>
        <taxon>Metazoa</taxon>
        <taxon>Chordata</taxon>
        <taxon>Craniata</taxon>
        <taxon>Vertebrata</taxon>
        <taxon>Euteleostomi</taxon>
        <taxon>Mammalia</taxon>
        <taxon>Eutheria</taxon>
        <taxon>Euarchontoglires</taxon>
        <taxon>Primates</taxon>
        <taxon>Haplorrhini</taxon>
        <taxon>Catarrhini</taxon>
        <taxon>Hominidae</taxon>
        <taxon>Pongo</taxon>
    </lineage>
</organism>
<keyword id="KW-0325">Glycoprotein</keyword>
<keyword id="KW-0328">Glycosyltransferase</keyword>
<keyword id="KW-0472">Membrane</keyword>
<keyword id="KW-1185">Reference proteome</keyword>
<keyword id="KW-0732">Signal</keyword>
<keyword id="KW-0808">Transferase</keyword>
<keyword id="KW-0812">Transmembrane</keyword>
<keyword id="KW-1133">Transmembrane helix</keyword>
<feature type="signal peptide" evidence="2">
    <location>
        <begin position="1"/>
        <end position="23"/>
    </location>
</feature>
<feature type="chain" id="PRO_0000299148" description="UDP-glucuronosyltransferase 2A3">
    <location>
        <begin position="24"/>
        <end position="527"/>
    </location>
</feature>
<feature type="topological domain" description="Extracellular" evidence="2">
    <location>
        <begin position="24"/>
        <end position="486"/>
    </location>
</feature>
<feature type="transmembrane region" description="Helical" evidence="2">
    <location>
        <begin position="487"/>
        <end position="507"/>
    </location>
</feature>
<feature type="topological domain" description="Cytoplasmic" evidence="2">
    <location>
        <begin position="508"/>
        <end position="523"/>
    </location>
</feature>
<feature type="glycosylation site" description="N-linked (GlcNAc...) asparagine" evidence="2">
    <location>
        <position position="313"/>
    </location>
</feature>
<comment type="function">
    <text evidence="1">UDP-glucuronosyltransferases catalyze phase II biotransformation reactions in which lipophilic substrates are conjugated with glucuronic acid to increase water solubility and enhance excretion. They are of major importance in the conjugation and subsequent elimination of potentially toxic xenobiotics and endogenous compounds (By similarity).</text>
</comment>
<comment type="catalytic activity">
    <reaction>
        <text>glucuronate acceptor + UDP-alpha-D-glucuronate = acceptor beta-D-glucuronoside + UDP + H(+)</text>
        <dbReference type="Rhea" id="RHEA:21032"/>
        <dbReference type="ChEBI" id="CHEBI:15378"/>
        <dbReference type="ChEBI" id="CHEBI:58052"/>
        <dbReference type="ChEBI" id="CHEBI:58223"/>
        <dbReference type="ChEBI" id="CHEBI:132367"/>
        <dbReference type="ChEBI" id="CHEBI:132368"/>
        <dbReference type="EC" id="2.4.1.17"/>
    </reaction>
</comment>
<comment type="subcellular location">
    <subcellularLocation>
        <location evidence="3">Membrane</location>
        <topology evidence="3">Single-pass type I membrane protein</topology>
    </subcellularLocation>
</comment>
<comment type="similarity">
    <text evidence="3">Belongs to the UDP-glycosyltransferase family.</text>
</comment>